<name>NRK1_MOUSE</name>
<dbReference type="EC" id="2.7.1.22" evidence="1"/>
<dbReference type="EC" id="2.7.1.173" evidence="1"/>
<dbReference type="EMBL" id="AK050579">
    <property type="protein sequence ID" value="BAC34328.1"/>
    <property type="molecule type" value="mRNA"/>
</dbReference>
<dbReference type="EMBL" id="AK169962">
    <property type="protein sequence ID" value="BAE41485.1"/>
    <property type="molecule type" value="mRNA"/>
</dbReference>
<dbReference type="EMBL" id="BC016495">
    <property type="protein sequence ID" value="AAH16495.1"/>
    <property type="molecule type" value="mRNA"/>
</dbReference>
<dbReference type="CCDS" id="CCDS37931.1"/>
<dbReference type="RefSeq" id="NP_663472.1">
    <property type="nucleotide sequence ID" value="NM_145497.2"/>
</dbReference>
<dbReference type="SMR" id="Q91W63"/>
<dbReference type="BioGRID" id="230454">
    <property type="interactions" value="1"/>
</dbReference>
<dbReference type="FunCoup" id="Q91W63">
    <property type="interactions" value="410"/>
</dbReference>
<dbReference type="STRING" id="10090.ENSMUSP00000158342"/>
<dbReference type="iPTMnet" id="Q91W63"/>
<dbReference type="PhosphoSitePlus" id="Q91W63"/>
<dbReference type="PaxDb" id="10090-ENSMUSP00000125384"/>
<dbReference type="ProteomicsDB" id="253017"/>
<dbReference type="Pumba" id="Q91W63"/>
<dbReference type="Antibodypedia" id="27143">
    <property type="antibodies" value="181 antibodies from 22 providers"/>
</dbReference>
<dbReference type="DNASU" id="225994"/>
<dbReference type="Ensembl" id="ENSMUST00000042392.14">
    <property type="protein sequence ID" value="ENSMUSP00000037198.8"/>
    <property type="gene ID" value="ENSMUSG00000037847.15"/>
</dbReference>
<dbReference type="Ensembl" id="ENSMUST00000237347.2">
    <property type="protein sequence ID" value="ENSMUSP00000158342.2"/>
    <property type="gene ID" value="ENSMUSG00000037847.15"/>
</dbReference>
<dbReference type="GeneID" id="225994"/>
<dbReference type="KEGG" id="mmu:225994"/>
<dbReference type="UCSC" id="uc008gxt.1">
    <property type="organism name" value="mouse"/>
</dbReference>
<dbReference type="AGR" id="MGI:2147434"/>
<dbReference type="CTD" id="54981"/>
<dbReference type="MGI" id="MGI:2147434">
    <property type="gene designation" value="Nmrk1"/>
</dbReference>
<dbReference type="VEuPathDB" id="HostDB:ENSMUSG00000037847"/>
<dbReference type="eggNOG" id="KOG3308">
    <property type="taxonomic scope" value="Eukaryota"/>
</dbReference>
<dbReference type="GeneTree" id="ENSGT00940000159384"/>
<dbReference type="HOGENOM" id="CLU_058668_0_0_1"/>
<dbReference type="InParanoid" id="Q91W63"/>
<dbReference type="OMA" id="VWPEYLK"/>
<dbReference type="OrthoDB" id="43574at9989"/>
<dbReference type="PhylomeDB" id="Q91W63"/>
<dbReference type="TreeFam" id="TF105395"/>
<dbReference type="BRENDA" id="2.7.1.22">
    <property type="organism ID" value="3474"/>
</dbReference>
<dbReference type="Reactome" id="R-MMU-196807">
    <property type="pathway name" value="Nicotinate metabolism"/>
</dbReference>
<dbReference type="UniPathway" id="UPA00253"/>
<dbReference type="BioGRID-ORCS" id="225994">
    <property type="hits" value="1 hit in 77 CRISPR screens"/>
</dbReference>
<dbReference type="PRO" id="PR:Q91W63"/>
<dbReference type="Proteomes" id="UP000000589">
    <property type="component" value="Chromosome 19"/>
</dbReference>
<dbReference type="RNAct" id="Q91W63">
    <property type="molecule type" value="protein"/>
</dbReference>
<dbReference type="Bgee" id="ENSMUSG00000037847">
    <property type="expression patterns" value="Expressed in right kidney and 192 other cell types or tissues"/>
</dbReference>
<dbReference type="ExpressionAtlas" id="Q91W63">
    <property type="expression patterns" value="baseline and differential"/>
</dbReference>
<dbReference type="GO" id="GO:0005829">
    <property type="term" value="C:cytosol"/>
    <property type="evidence" value="ECO:0000314"/>
    <property type="project" value="MGI"/>
</dbReference>
<dbReference type="GO" id="GO:0005524">
    <property type="term" value="F:ATP binding"/>
    <property type="evidence" value="ECO:0007669"/>
    <property type="project" value="UniProtKB-KW"/>
</dbReference>
<dbReference type="GO" id="GO:0046872">
    <property type="term" value="F:metal ion binding"/>
    <property type="evidence" value="ECO:0007669"/>
    <property type="project" value="UniProtKB-KW"/>
</dbReference>
<dbReference type="GO" id="GO:0034317">
    <property type="term" value="F:nicotinate riboside kinase activity"/>
    <property type="evidence" value="ECO:0007669"/>
    <property type="project" value="UniProtKB-EC"/>
</dbReference>
<dbReference type="GO" id="GO:0050262">
    <property type="term" value="F:ribosylnicotinamide kinase activity"/>
    <property type="evidence" value="ECO:0000316"/>
    <property type="project" value="MGI"/>
</dbReference>
<dbReference type="GO" id="GO:0061769">
    <property type="term" value="F:ribosylnicotinate kinase activity"/>
    <property type="evidence" value="ECO:0000316"/>
    <property type="project" value="MGI"/>
</dbReference>
<dbReference type="GO" id="GO:0034355">
    <property type="term" value="P:NAD biosynthetic process via the salvage pathway"/>
    <property type="evidence" value="ECO:0000316"/>
    <property type="project" value="MGI"/>
</dbReference>
<dbReference type="GO" id="GO:0006741">
    <property type="term" value="P:NADP biosynthetic process"/>
    <property type="evidence" value="ECO:0000315"/>
    <property type="project" value="MGI"/>
</dbReference>
<dbReference type="CDD" id="cd02024">
    <property type="entry name" value="NRK1"/>
    <property type="match status" value="1"/>
</dbReference>
<dbReference type="FunFam" id="3.40.50.300:FF:000853">
    <property type="entry name" value="Nicotinamide riboside kinase 1"/>
    <property type="match status" value="1"/>
</dbReference>
<dbReference type="Gene3D" id="3.40.50.300">
    <property type="entry name" value="P-loop containing nucleotide triphosphate hydrolases"/>
    <property type="match status" value="1"/>
</dbReference>
<dbReference type="InterPro" id="IPR027417">
    <property type="entry name" value="P-loop_NTPase"/>
</dbReference>
<dbReference type="PANTHER" id="PTHR10285">
    <property type="entry name" value="URIDINE KINASE"/>
    <property type="match status" value="1"/>
</dbReference>
<dbReference type="Pfam" id="PF13238">
    <property type="entry name" value="AAA_18"/>
    <property type="match status" value="1"/>
</dbReference>
<dbReference type="SUPFAM" id="SSF52540">
    <property type="entry name" value="P-loop containing nucleoside triphosphate hydrolases"/>
    <property type="match status" value="1"/>
</dbReference>
<accession>Q91W63</accession>
<accession>Q3TDW3</accession>
<feature type="chain" id="PRO_0000215892" description="Nicotinamide riboside kinase 1">
    <location>
        <begin position="1"/>
        <end position="195"/>
    </location>
</feature>
<feature type="active site" description="Proton acceptor" evidence="1">
    <location>
        <position position="36"/>
    </location>
</feature>
<feature type="binding site" evidence="1">
    <location>
        <begin position="10"/>
        <end position="18"/>
    </location>
    <ligand>
        <name>ATP</name>
        <dbReference type="ChEBI" id="CHEBI:30616"/>
    </ligand>
</feature>
<feature type="binding site" evidence="1">
    <location>
        <position position="17"/>
    </location>
    <ligand>
        <name>Mg(2+)</name>
        <dbReference type="ChEBI" id="CHEBI:18420"/>
    </ligand>
</feature>
<feature type="binding site" evidence="1">
    <location>
        <begin position="36"/>
        <end position="39"/>
    </location>
    <ligand>
        <name>substrate</name>
    </ligand>
</feature>
<feature type="binding site" evidence="1">
    <location>
        <position position="36"/>
    </location>
    <ligand>
        <name>Mg(2+)</name>
        <dbReference type="ChEBI" id="CHEBI:18420"/>
    </ligand>
</feature>
<feature type="binding site" evidence="1">
    <location>
        <begin position="55"/>
        <end position="56"/>
    </location>
    <ligand>
        <name>substrate</name>
    </ligand>
</feature>
<feature type="binding site" evidence="1">
    <location>
        <position position="128"/>
    </location>
    <ligand>
        <name>ATP</name>
        <dbReference type="ChEBI" id="CHEBI:30616"/>
    </ligand>
</feature>
<feature type="binding site" evidence="1">
    <location>
        <position position="129"/>
    </location>
    <ligand>
        <name>substrate</name>
    </ligand>
</feature>
<feature type="binding site" evidence="1">
    <location>
        <begin position="132"/>
        <end position="134"/>
    </location>
    <ligand>
        <name>ATP</name>
        <dbReference type="ChEBI" id="CHEBI:30616"/>
    </ligand>
</feature>
<feature type="binding site" evidence="1">
    <location>
        <begin position="134"/>
        <end position="135"/>
    </location>
    <ligand>
        <name>substrate</name>
    </ligand>
</feature>
<feature type="binding site" evidence="1">
    <location>
        <begin position="172"/>
        <end position="174"/>
    </location>
    <ligand>
        <name>ATP</name>
        <dbReference type="ChEBI" id="CHEBI:30616"/>
    </ligand>
</feature>
<comment type="function">
    <text evidence="1">Catalyzes the phosphorylation of nicotinamide riboside (NR) and nicotinic acid riboside (NaR) to form nicotinamide mononucleotide (NMN) and nicotinic acid mononucleotide (NaMN).</text>
</comment>
<comment type="catalytic activity">
    <reaction evidence="1">
        <text>beta-nicotinamide D-riboside + ATP = beta-nicotinamide D-ribonucleotide + ADP + H(+)</text>
        <dbReference type="Rhea" id="RHEA:14017"/>
        <dbReference type="ChEBI" id="CHEBI:14649"/>
        <dbReference type="ChEBI" id="CHEBI:15378"/>
        <dbReference type="ChEBI" id="CHEBI:15927"/>
        <dbReference type="ChEBI" id="CHEBI:30616"/>
        <dbReference type="ChEBI" id="CHEBI:456216"/>
        <dbReference type="EC" id="2.7.1.22"/>
    </reaction>
</comment>
<comment type="catalytic activity">
    <reaction evidence="1">
        <text>beta-D-ribosylnicotinate + ATP = nicotinate beta-D-ribonucleotide + ADP + H(+)</text>
        <dbReference type="Rhea" id="RHEA:25568"/>
        <dbReference type="ChEBI" id="CHEBI:15378"/>
        <dbReference type="ChEBI" id="CHEBI:30616"/>
        <dbReference type="ChEBI" id="CHEBI:57502"/>
        <dbReference type="ChEBI" id="CHEBI:58527"/>
        <dbReference type="ChEBI" id="CHEBI:456216"/>
        <dbReference type="EC" id="2.7.1.173"/>
    </reaction>
</comment>
<comment type="pathway">
    <text evidence="1">Cofactor biosynthesis; NAD(+) biosynthesis.</text>
</comment>
<comment type="subunit">
    <text evidence="1">Monomer.</text>
</comment>
<comment type="similarity">
    <text evidence="2">Belongs to the uridine kinase family. NRK subfamily.</text>
</comment>
<evidence type="ECO:0000250" key="1">
    <source>
        <dbReference type="UniProtKB" id="Q9NWW6"/>
    </source>
</evidence>
<evidence type="ECO:0000305" key="2"/>
<sequence length="195" mass="22303">MKRFVIGIGGVTNGGKTTLAKSLQKHLPNCSVISQDDFFKPESEIDIDENGFLQYDVLEALNMEKMMSAVSCWMENPGSSAGPAALESAQGVPILIIEGFLLFNYKPLDTIWNRSYFLTVPYEECKRRRSTRVYEPPDPPGYFDGHVWPMYLKHRQEMSSITWDIVYLDGTRSEEDLFSQVYEDVKQELEKQNGL</sequence>
<protein>
    <recommendedName>
        <fullName>Nicotinamide riboside kinase 1</fullName>
        <shortName>NRK 1</shortName>
        <shortName>NmR-K 1</shortName>
        <ecNumber evidence="1">2.7.1.22</ecNumber>
    </recommendedName>
    <alternativeName>
        <fullName>Nicotinic acid riboside kinase 1</fullName>
        <ecNumber evidence="1">2.7.1.173</ecNumber>
    </alternativeName>
    <alternativeName>
        <fullName>Ribosylnicotinamide kinase 1</fullName>
        <shortName>RNK 1</shortName>
    </alternativeName>
    <alternativeName>
        <fullName>Ribosylnicotinic acid kinase 1</fullName>
    </alternativeName>
</protein>
<keyword id="KW-0067">ATP-binding</keyword>
<keyword id="KW-0418">Kinase</keyword>
<keyword id="KW-0460">Magnesium</keyword>
<keyword id="KW-0479">Metal-binding</keyword>
<keyword id="KW-0547">Nucleotide-binding</keyword>
<keyword id="KW-0662">Pyridine nucleotide biosynthesis</keyword>
<keyword id="KW-1185">Reference proteome</keyword>
<keyword id="KW-0808">Transferase</keyword>
<reference key="1">
    <citation type="journal article" date="2005" name="Science">
        <title>The transcriptional landscape of the mammalian genome.</title>
        <authorList>
            <person name="Carninci P."/>
            <person name="Kasukawa T."/>
            <person name="Katayama S."/>
            <person name="Gough J."/>
            <person name="Frith M.C."/>
            <person name="Maeda N."/>
            <person name="Oyama R."/>
            <person name="Ravasi T."/>
            <person name="Lenhard B."/>
            <person name="Wells C."/>
            <person name="Kodzius R."/>
            <person name="Shimokawa K."/>
            <person name="Bajic V.B."/>
            <person name="Brenner S.E."/>
            <person name="Batalov S."/>
            <person name="Forrest A.R."/>
            <person name="Zavolan M."/>
            <person name="Davis M.J."/>
            <person name="Wilming L.G."/>
            <person name="Aidinis V."/>
            <person name="Allen J.E."/>
            <person name="Ambesi-Impiombato A."/>
            <person name="Apweiler R."/>
            <person name="Aturaliya R.N."/>
            <person name="Bailey T.L."/>
            <person name="Bansal M."/>
            <person name="Baxter L."/>
            <person name="Beisel K.W."/>
            <person name="Bersano T."/>
            <person name="Bono H."/>
            <person name="Chalk A.M."/>
            <person name="Chiu K.P."/>
            <person name="Choudhary V."/>
            <person name="Christoffels A."/>
            <person name="Clutterbuck D.R."/>
            <person name="Crowe M.L."/>
            <person name="Dalla E."/>
            <person name="Dalrymple B.P."/>
            <person name="de Bono B."/>
            <person name="Della Gatta G."/>
            <person name="di Bernardo D."/>
            <person name="Down T."/>
            <person name="Engstrom P."/>
            <person name="Fagiolini M."/>
            <person name="Faulkner G."/>
            <person name="Fletcher C.F."/>
            <person name="Fukushima T."/>
            <person name="Furuno M."/>
            <person name="Futaki S."/>
            <person name="Gariboldi M."/>
            <person name="Georgii-Hemming P."/>
            <person name="Gingeras T.R."/>
            <person name="Gojobori T."/>
            <person name="Green R.E."/>
            <person name="Gustincich S."/>
            <person name="Harbers M."/>
            <person name="Hayashi Y."/>
            <person name="Hensch T.K."/>
            <person name="Hirokawa N."/>
            <person name="Hill D."/>
            <person name="Huminiecki L."/>
            <person name="Iacono M."/>
            <person name="Ikeo K."/>
            <person name="Iwama A."/>
            <person name="Ishikawa T."/>
            <person name="Jakt M."/>
            <person name="Kanapin A."/>
            <person name="Katoh M."/>
            <person name="Kawasawa Y."/>
            <person name="Kelso J."/>
            <person name="Kitamura H."/>
            <person name="Kitano H."/>
            <person name="Kollias G."/>
            <person name="Krishnan S.P."/>
            <person name="Kruger A."/>
            <person name="Kummerfeld S.K."/>
            <person name="Kurochkin I.V."/>
            <person name="Lareau L.F."/>
            <person name="Lazarevic D."/>
            <person name="Lipovich L."/>
            <person name="Liu J."/>
            <person name="Liuni S."/>
            <person name="McWilliam S."/>
            <person name="Madan Babu M."/>
            <person name="Madera M."/>
            <person name="Marchionni L."/>
            <person name="Matsuda H."/>
            <person name="Matsuzawa S."/>
            <person name="Miki H."/>
            <person name="Mignone F."/>
            <person name="Miyake S."/>
            <person name="Morris K."/>
            <person name="Mottagui-Tabar S."/>
            <person name="Mulder N."/>
            <person name="Nakano N."/>
            <person name="Nakauchi H."/>
            <person name="Ng P."/>
            <person name="Nilsson R."/>
            <person name="Nishiguchi S."/>
            <person name="Nishikawa S."/>
            <person name="Nori F."/>
            <person name="Ohara O."/>
            <person name="Okazaki Y."/>
            <person name="Orlando V."/>
            <person name="Pang K.C."/>
            <person name="Pavan W.J."/>
            <person name="Pavesi G."/>
            <person name="Pesole G."/>
            <person name="Petrovsky N."/>
            <person name="Piazza S."/>
            <person name="Reed J."/>
            <person name="Reid J.F."/>
            <person name="Ring B.Z."/>
            <person name="Ringwald M."/>
            <person name="Rost B."/>
            <person name="Ruan Y."/>
            <person name="Salzberg S.L."/>
            <person name="Sandelin A."/>
            <person name="Schneider C."/>
            <person name="Schoenbach C."/>
            <person name="Sekiguchi K."/>
            <person name="Semple C.A."/>
            <person name="Seno S."/>
            <person name="Sessa L."/>
            <person name="Sheng Y."/>
            <person name="Shibata Y."/>
            <person name="Shimada H."/>
            <person name="Shimada K."/>
            <person name="Silva D."/>
            <person name="Sinclair B."/>
            <person name="Sperling S."/>
            <person name="Stupka E."/>
            <person name="Sugiura K."/>
            <person name="Sultana R."/>
            <person name="Takenaka Y."/>
            <person name="Taki K."/>
            <person name="Tammoja K."/>
            <person name="Tan S.L."/>
            <person name="Tang S."/>
            <person name="Taylor M.S."/>
            <person name="Tegner J."/>
            <person name="Teichmann S.A."/>
            <person name="Ueda H.R."/>
            <person name="van Nimwegen E."/>
            <person name="Verardo R."/>
            <person name="Wei C.L."/>
            <person name="Yagi K."/>
            <person name="Yamanishi H."/>
            <person name="Zabarovsky E."/>
            <person name="Zhu S."/>
            <person name="Zimmer A."/>
            <person name="Hide W."/>
            <person name="Bult C."/>
            <person name="Grimmond S.M."/>
            <person name="Teasdale R.D."/>
            <person name="Liu E.T."/>
            <person name="Brusic V."/>
            <person name="Quackenbush J."/>
            <person name="Wahlestedt C."/>
            <person name="Mattick J.S."/>
            <person name="Hume D.A."/>
            <person name="Kai C."/>
            <person name="Sasaki D."/>
            <person name="Tomaru Y."/>
            <person name="Fukuda S."/>
            <person name="Kanamori-Katayama M."/>
            <person name="Suzuki M."/>
            <person name="Aoki J."/>
            <person name="Arakawa T."/>
            <person name="Iida J."/>
            <person name="Imamura K."/>
            <person name="Itoh M."/>
            <person name="Kato T."/>
            <person name="Kawaji H."/>
            <person name="Kawagashira N."/>
            <person name="Kawashima T."/>
            <person name="Kojima M."/>
            <person name="Kondo S."/>
            <person name="Konno H."/>
            <person name="Nakano K."/>
            <person name="Ninomiya N."/>
            <person name="Nishio T."/>
            <person name="Okada M."/>
            <person name="Plessy C."/>
            <person name="Shibata K."/>
            <person name="Shiraki T."/>
            <person name="Suzuki S."/>
            <person name="Tagami M."/>
            <person name="Waki K."/>
            <person name="Watahiki A."/>
            <person name="Okamura-Oho Y."/>
            <person name="Suzuki H."/>
            <person name="Kawai J."/>
            <person name="Hayashizaki Y."/>
        </authorList>
    </citation>
    <scope>NUCLEOTIDE SEQUENCE [LARGE SCALE MRNA]</scope>
    <source>
        <strain>C57BL/6J</strain>
        <strain>NOD</strain>
        <tissue>Thymus</tissue>
    </source>
</reference>
<reference key="2">
    <citation type="journal article" date="2004" name="Genome Res.">
        <title>The status, quality, and expansion of the NIH full-length cDNA project: the Mammalian Gene Collection (MGC).</title>
        <authorList>
            <consortium name="The MGC Project Team"/>
        </authorList>
    </citation>
    <scope>NUCLEOTIDE SEQUENCE [LARGE SCALE MRNA]</scope>
    <source>
        <tissue>Kidney</tissue>
    </source>
</reference>
<reference key="3">
    <citation type="journal article" date="2010" name="Cell">
        <title>A tissue-specific atlas of mouse protein phosphorylation and expression.</title>
        <authorList>
            <person name="Huttlin E.L."/>
            <person name="Jedrychowski M.P."/>
            <person name="Elias J.E."/>
            <person name="Goswami T."/>
            <person name="Rad R."/>
            <person name="Beausoleil S.A."/>
            <person name="Villen J."/>
            <person name="Haas W."/>
            <person name="Sowa M.E."/>
            <person name="Gygi S.P."/>
        </authorList>
    </citation>
    <scope>IDENTIFICATION BY MASS SPECTROMETRY [LARGE SCALE ANALYSIS]</scope>
    <source>
        <tissue>Kidney</tissue>
        <tissue>Liver</tissue>
    </source>
</reference>
<gene>
    <name type="primary">Nmrk1</name>
    <name type="synonym">Nrk1</name>
</gene>
<organism>
    <name type="scientific">Mus musculus</name>
    <name type="common">Mouse</name>
    <dbReference type="NCBI Taxonomy" id="10090"/>
    <lineage>
        <taxon>Eukaryota</taxon>
        <taxon>Metazoa</taxon>
        <taxon>Chordata</taxon>
        <taxon>Craniata</taxon>
        <taxon>Vertebrata</taxon>
        <taxon>Euteleostomi</taxon>
        <taxon>Mammalia</taxon>
        <taxon>Eutheria</taxon>
        <taxon>Euarchontoglires</taxon>
        <taxon>Glires</taxon>
        <taxon>Rodentia</taxon>
        <taxon>Myomorpha</taxon>
        <taxon>Muroidea</taxon>
        <taxon>Muridae</taxon>
        <taxon>Murinae</taxon>
        <taxon>Mus</taxon>
        <taxon>Mus</taxon>
    </lineage>
</organism>
<proteinExistence type="evidence at protein level"/>